<reference key="1">
    <citation type="submission" date="2008-10" db="EMBL/GenBank/DDBJ databases">
        <title>Genome sequence of Bacillus anthracis str. CDC 684.</title>
        <authorList>
            <person name="Dodson R.J."/>
            <person name="Munk A.C."/>
            <person name="Brettin T."/>
            <person name="Bruce D."/>
            <person name="Detter C."/>
            <person name="Tapia R."/>
            <person name="Han C."/>
            <person name="Sutton G."/>
            <person name="Sims D."/>
        </authorList>
    </citation>
    <scope>NUCLEOTIDE SEQUENCE [LARGE SCALE GENOMIC DNA]</scope>
    <source>
        <strain>CDC 684 / NRRL 3495</strain>
    </source>
</reference>
<gene>
    <name evidence="1" type="primary">tmcAL</name>
    <name type="ordered locus">BAMEG_4176</name>
</gene>
<organism>
    <name type="scientific">Bacillus anthracis (strain CDC 684 / NRRL 3495)</name>
    <dbReference type="NCBI Taxonomy" id="568206"/>
    <lineage>
        <taxon>Bacteria</taxon>
        <taxon>Bacillati</taxon>
        <taxon>Bacillota</taxon>
        <taxon>Bacilli</taxon>
        <taxon>Bacillales</taxon>
        <taxon>Bacillaceae</taxon>
        <taxon>Bacillus</taxon>
        <taxon>Bacillus cereus group</taxon>
    </lineage>
</organism>
<accession>C3LHZ0</accession>
<name>TMCAL_BACAC</name>
<proteinExistence type="inferred from homology"/>
<comment type="function">
    <text evidence="1">Catalyzes the formation of N(4)-acetylcytidine (ac(4)C) at the wobble position of elongator tRNA(Met), using acetate and ATP as substrates. First activates an acetate ion to form acetyladenylate (Ac-AMP) and then transfers the acetyl group to tRNA to form ac(4)C34.</text>
</comment>
<comment type="catalytic activity">
    <reaction evidence="1">
        <text>cytidine(34) in elongator tRNA(Met) + acetate + ATP = N(4)-acetylcytidine(34) in elongator tRNA(Met) + AMP + diphosphate</text>
        <dbReference type="Rhea" id="RHEA:58144"/>
        <dbReference type="Rhea" id="RHEA-COMP:10693"/>
        <dbReference type="Rhea" id="RHEA-COMP:10694"/>
        <dbReference type="ChEBI" id="CHEBI:30089"/>
        <dbReference type="ChEBI" id="CHEBI:30616"/>
        <dbReference type="ChEBI" id="CHEBI:33019"/>
        <dbReference type="ChEBI" id="CHEBI:74900"/>
        <dbReference type="ChEBI" id="CHEBI:82748"/>
        <dbReference type="ChEBI" id="CHEBI:456215"/>
    </reaction>
</comment>
<comment type="subcellular location">
    <subcellularLocation>
        <location evidence="1">Cytoplasm</location>
    </subcellularLocation>
</comment>
<comment type="similarity">
    <text evidence="1">Belongs to the TmcAL family.</text>
</comment>
<keyword id="KW-0067">ATP-binding</keyword>
<keyword id="KW-0963">Cytoplasm</keyword>
<keyword id="KW-0436">Ligase</keyword>
<keyword id="KW-0547">Nucleotide-binding</keyword>
<keyword id="KW-0694">RNA-binding</keyword>
<keyword id="KW-0819">tRNA processing</keyword>
<keyword id="KW-0820">tRNA-binding</keyword>
<feature type="chain" id="PRO_1000185214" description="tRNA(Met) cytidine acetate ligase">
    <location>
        <begin position="1"/>
        <end position="393"/>
    </location>
</feature>
<feature type="binding site" evidence="1">
    <location>
        <position position="81"/>
    </location>
    <ligand>
        <name>ATP</name>
        <dbReference type="ChEBI" id="CHEBI:30616"/>
    </ligand>
</feature>
<feature type="binding site" evidence="1">
    <location>
        <position position="142"/>
    </location>
    <ligand>
        <name>ATP</name>
        <dbReference type="ChEBI" id="CHEBI:30616"/>
    </ligand>
</feature>
<feature type="binding site" evidence="1">
    <location>
        <position position="167"/>
    </location>
    <ligand>
        <name>ATP</name>
        <dbReference type="ChEBI" id="CHEBI:30616"/>
    </ligand>
</feature>
<sequence>MQQTKKLTHSDITIAVMSGPFLQRGEPALVSKWYRTKMALACGVDLVVELPYAFSTQKAETFANGAISILNALHVSEICFGSEDGQIENFYNTISVQKNEEETFNRLVKQFMNAGNSYAKATSEAFLHILSSEKNIDMSQPNNILGFQYIKAILMQNSSMQAQTIKRFASHYHDETFNDQHIASATSIRKQLFSENSSFTEIESFIPKATASLLASYKQNYGTLHNWEQYFSFFKYKLMTMSPENLRHIYEIEEGLEHRILSKIQTSSSFHSFMESLKTKRYTWTRLQRACTHILTNTTKEEIYCANIEQHAPYIRLLGMSQKGQTYLSKNKKKIELPILTHTKTFDHPTLHIERKANSVYFSIMKEPLRTQLLKRDATHHPIRYDETTAKFL</sequence>
<protein>
    <recommendedName>
        <fullName evidence="1">tRNA(Met) cytidine acetate ligase</fullName>
        <ecNumber evidence="1">6.3.4.-</ecNumber>
    </recommendedName>
</protein>
<evidence type="ECO:0000255" key="1">
    <source>
        <dbReference type="HAMAP-Rule" id="MF_01539"/>
    </source>
</evidence>
<dbReference type="EC" id="6.3.4.-" evidence="1"/>
<dbReference type="EMBL" id="CP001215">
    <property type="protein sequence ID" value="ACP12719.1"/>
    <property type="molecule type" value="Genomic_DNA"/>
</dbReference>
<dbReference type="SMR" id="C3LHZ0"/>
<dbReference type="KEGG" id="bah:BAMEG_4176"/>
<dbReference type="HOGENOM" id="CLU_038915_0_2_9"/>
<dbReference type="GO" id="GO:0005737">
    <property type="term" value="C:cytoplasm"/>
    <property type="evidence" value="ECO:0007669"/>
    <property type="project" value="UniProtKB-SubCell"/>
</dbReference>
<dbReference type="GO" id="GO:0005524">
    <property type="term" value="F:ATP binding"/>
    <property type="evidence" value="ECO:0007669"/>
    <property type="project" value="UniProtKB-KW"/>
</dbReference>
<dbReference type="GO" id="GO:0016879">
    <property type="term" value="F:ligase activity, forming carbon-nitrogen bonds"/>
    <property type="evidence" value="ECO:0007669"/>
    <property type="project" value="UniProtKB-UniRule"/>
</dbReference>
<dbReference type="GO" id="GO:0000049">
    <property type="term" value="F:tRNA binding"/>
    <property type="evidence" value="ECO:0007669"/>
    <property type="project" value="UniProtKB-KW"/>
</dbReference>
<dbReference type="GO" id="GO:0006400">
    <property type="term" value="P:tRNA modification"/>
    <property type="evidence" value="ECO:0007669"/>
    <property type="project" value="UniProtKB-UniRule"/>
</dbReference>
<dbReference type="Gene3D" id="3.40.50.620">
    <property type="entry name" value="HUPs"/>
    <property type="match status" value="1"/>
</dbReference>
<dbReference type="HAMAP" id="MF_01539">
    <property type="entry name" value="TmcAL"/>
    <property type="match status" value="1"/>
</dbReference>
<dbReference type="InterPro" id="IPR014729">
    <property type="entry name" value="Rossmann-like_a/b/a_fold"/>
</dbReference>
<dbReference type="InterPro" id="IPR008513">
    <property type="entry name" value="tRNA(Met)_cyd_acetate_ligase"/>
</dbReference>
<dbReference type="NCBIfam" id="NF010191">
    <property type="entry name" value="PRK13670.1"/>
    <property type="match status" value="1"/>
</dbReference>
<dbReference type="PANTHER" id="PTHR37825">
    <property type="entry name" value="TRNA(MET) CYTIDINE ACETATE LIGASE"/>
    <property type="match status" value="1"/>
</dbReference>
<dbReference type="PANTHER" id="PTHR37825:SF1">
    <property type="entry name" value="TRNA(MET) CYTIDINE ACETATE LIGASE"/>
    <property type="match status" value="1"/>
</dbReference>
<dbReference type="Pfam" id="PF05636">
    <property type="entry name" value="HIGH_NTase1"/>
    <property type="match status" value="1"/>
</dbReference>
<dbReference type="SUPFAM" id="SSF52374">
    <property type="entry name" value="Nucleotidylyl transferase"/>
    <property type="match status" value="1"/>
</dbReference>